<proteinExistence type="inferred from homology"/>
<gene>
    <name evidence="1" type="primary">pgi</name>
    <name type="ordered locus">BQ2027_MB0971C</name>
</gene>
<keyword id="KW-0963">Cytoplasm</keyword>
<keyword id="KW-0312">Gluconeogenesis</keyword>
<keyword id="KW-0324">Glycolysis</keyword>
<keyword id="KW-0413">Isomerase</keyword>
<keyword id="KW-1185">Reference proteome</keyword>
<protein>
    <recommendedName>
        <fullName evidence="1">Glucose-6-phosphate isomerase</fullName>
        <shortName evidence="1">GPI</shortName>
        <ecNumber evidence="1">5.3.1.9</ecNumber>
    </recommendedName>
    <alternativeName>
        <fullName evidence="1">Phosphoglucose isomerase</fullName>
        <shortName evidence="1">PGI</shortName>
    </alternativeName>
    <alternativeName>
        <fullName evidence="1">Phosphohexose isomerase</fullName>
        <shortName evidence="1">PHI</shortName>
    </alternativeName>
</protein>
<name>G6PI_MYCBO</name>
<feature type="chain" id="PRO_0000180673" description="Glucose-6-phosphate isomerase">
    <location>
        <begin position="1"/>
        <end position="553"/>
    </location>
</feature>
<feature type="region of interest" description="Disordered" evidence="2">
    <location>
        <begin position="524"/>
        <end position="553"/>
    </location>
</feature>
<feature type="compositionally biased region" description="Basic and acidic residues" evidence="2">
    <location>
        <begin position="541"/>
        <end position="553"/>
    </location>
</feature>
<feature type="active site" description="Proton donor" evidence="1">
    <location>
        <position position="357"/>
    </location>
</feature>
<feature type="active site" evidence="1">
    <location>
        <position position="388"/>
    </location>
</feature>
<feature type="active site" evidence="1">
    <location>
        <position position="514"/>
    </location>
</feature>
<evidence type="ECO:0000255" key="1">
    <source>
        <dbReference type="HAMAP-Rule" id="MF_00473"/>
    </source>
</evidence>
<evidence type="ECO:0000256" key="2">
    <source>
        <dbReference type="SAM" id="MobiDB-lite"/>
    </source>
</evidence>
<evidence type="ECO:0000305" key="3"/>
<accession>P64193</accession>
<accession>A0A1R3XWX2</accession>
<accession>P77895</accession>
<accession>X2BGN2</accession>
<reference key="1">
    <citation type="journal article" date="2003" name="Proc. Natl. Acad. Sci. U.S.A.">
        <title>The complete genome sequence of Mycobacterium bovis.</title>
        <authorList>
            <person name="Garnier T."/>
            <person name="Eiglmeier K."/>
            <person name="Camus J.-C."/>
            <person name="Medina N."/>
            <person name="Mansoor H."/>
            <person name="Pryor M."/>
            <person name="Duthoy S."/>
            <person name="Grondin S."/>
            <person name="Lacroix C."/>
            <person name="Monsempe C."/>
            <person name="Simon S."/>
            <person name="Harris B."/>
            <person name="Atkin R."/>
            <person name="Doggett J."/>
            <person name="Mayes R."/>
            <person name="Keating L."/>
            <person name="Wheeler P.R."/>
            <person name="Parkhill J."/>
            <person name="Barrell B.G."/>
            <person name="Cole S.T."/>
            <person name="Gordon S.V."/>
            <person name="Hewinson R.G."/>
        </authorList>
    </citation>
    <scope>NUCLEOTIDE SEQUENCE [LARGE SCALE GENOMIC DNA]</scope>
    <source>
        <strain>ATCC BAA-935 / AF2122/97</strain>
    </source>
</reference>
<reference key="2">
    <citation type="journal article" date="2017" name="Genome Announc.">
        <title>Updated reference genome sequence and annotation of Mycobacterium bovis AF2122/97.</title>
        <authorList>
            <person name="Malone K.M."/>
            <person name="Farrell D."/>
            <person name="Stuber T.P."/>
            <person name="Schubert O.T."/>
            <person name="Aebersold R."/>
            <person name="Robbe-Austerman S."/>
            <person name="Gordon S.V."/>
        </authorList>
    </citation>
    <scope>NUCLEOTIDE SEQUENCE [LARGE SCALE GENOMIC DNA]</scope>
    <scope>GENOME REANNOTATION</scope>
    <source>
        <strain>ATCC BAA-935 / AF2122/97</strain>
    </source>
</reference>
<organism>
    <name type="scientific">Mycobacterium bovis (strain ATCC BAA-935 / AF2122/97)</name>
    <dbReference type="NCBI Taxonomy" id="233413"/>
    <lineage>
        <taxon>Bacteria</taxon>
        <taxon>Bacillati</taxon>
        <taxon>Actinomycetota</taxon>
        <taxon>Actinomycetes</taxon>
        <taxon>Mycobacteriales</taxon>
        <taxon>Mycobacteriaceae</taxon>
        <taxon>Mycobacterium</taxon>
        <taxon>Mycobacterium tuberculosis complex</taxon>
    </lineage>
</organism>
<comment type="function">
    <text evidence="1">Catalyzes the reversible isomerization of glucose-6-phosphate to fructose-6-phosphate.</text>
</comment>
<comment type="catalytic activity">
    <reaction evidence="1">
        <text>alpha-D-glucose 6-phosphate = beta-D-fructose 6-phosphate</text>
        <dbReference type="Rhea" id="RHEA:11816"/>
        <dbReference type="ChEBI" id="CHEBI:57634"/>
        <dbReference type="ChEBI" id="CHEBI:58225"/>
        <dbReference type="EC" id="5.3.1.9"/>
    </reaction>
</comment>
<comment type="pathway">
    <text evidence="1">Carbohydrate biosynthesis; gluconeogenesis.</text>
</comment>
<comment type="pathway">
    <text evidence="1">Carbohydrate degradation; glycolysis; D-glyceraldehyde 3-phosphate and glycerone phosphate from D-glucose: step 2/4.</text>
</comment>
<comment type="subcellular location">
    <subcellularLocation>
        <location evidence="1">Cytoplasm</location>
    </subcellularLocation>
</comment>
<comment type="similarity">
    <text evidence="1 3">Belongs to the GPI family.</text>
</comment>
<sequence length="553" mass="59974">MTSAPIPDITATPAWDALRRHHDQIGNTHLRQFFADDPGRGRELTVSVGDLYIDYSKHRVTRETLALLIDLARTAHLEERRDQMFAGVHINTSEDRAVLHTALRLPRDAELVVDGQDVVTDVHAVLDAMGAFTDRLRSGEWTGATGKRISTVVNIGIGGSDLGPVMVYQALRHYADAGISARFVSNVDPADLIATLADLDPATTLFIVASKTFSTLETLTNATAARRWLTDALGDAAVSRHFVAVSTNKRLVDDFGINTDNMFGFWDWVGGRYSVDSAIGLSLMTVIGRDAFADFLAGFHIIDRHFATAPLESNAPVLLGLIGLWYSNFFGAQSRTVLPYSNDLSRFPAYLQQLTMESNGKSTRADGSPVSADTGEIFWGEPGTNGQHAFYQLLHQGTRLVPADFIGFAQPLDDLPTAEGTGSMHDLLMSNFFAQTQVLAFGKTAEEIAADGTPAHVVAHKVMPGNRPSTSILASRLTPSVLGQLIALYEHQVFTEGVVWGIDSFDQWGVELGKTQAKALLPVITGAGSPPPQSDSSTDGLVRRYRTERGRAG</sequence>
<dbReference type="EC" id="5.3.1.9" evidence="1"/>
<dbReference type="EMBL" id="LT708304">
    <property type="protein sequence ID" value="SIT99569.1"/>
    <property type="molecule type" value="Genomic_DNA"/>
</dbReference>
<dbReference type="RefSeq" id="NP_854628.1">
    <property type="nucleotide sequence ID" value="NC_002945.3"/>
</dbReference>
<dbReference type="RefSeq" id="WP_003404830.1">
    <property type="nucleotide sequence ID" value="NC_002945.4"/>
</dbReference>
<dbReference type="SMR" id="P64193"/>
<dbReference type="GeneID" id="45424915"/>
<dbReference type="KEGG" id="mbo:BQ2027_MB0971C"/>
<dbReference type="PATRIC" id="fig|233413.5.peg.1056"/>
<dbReference type="UniPathway" id="UPA00109">
    <property type="reaction ID" value="UER00181"/>
</dbReference>
<dbReference type="UniPathway" id="UPA00138"/>
<dbReference type="Proteomes" id="UP000001419">
    <property type="component" value="Chromosome"/>
</dbReference>
<dbReference type="GO" id="GO:0005829">
    <property type="term" value="C:cytosol"/>
    <property type="evidence" value="ECO:0007669"/>
    <property type="project" value="TreeGrafter"/>
</dbReference>
<dbReference type="GO" id="GO:0097367">
    <property type="term" value="F:carbohydrate derivative binding"/>
    <property type="evidence" value="ECO:0007669"/>
    <property type="project" value="InterPro"/>
</dbReference>
<dbReference type="GO" id="GO:0004347">
    <property type="term" value="F:glucose-6-phosphate isomerase activity"/>
    <property type="evidence" value="ECO:0007669"/>
    <property type="project" value="UniProtKB-UniRule"/>
</dbReference>
<dbReference type="GO" id="GO:0048029">
    <property type="term" value="F:monosaccharide binding"/>
    <property type="evidence" value="ECO:0007669"/>
    <property type="project" value="TreeGrafter"/>
</dbReference>
<dbReference type="GO" id="GO:0006094">
    <property type="term" value="P:gluconeogenesis"/>
    <property type="evidence" value="ECO:0007669"/>
    <property type="project" value="UniProtKB-UniRule"/>
</dbReference>
<dbReference type="GO" id="GO:0051156">
    <property type="term" value="P:glucose 6-phosphate metabolic process"/>
    <property type="evidence" value="ECO:0007669"/>
    <property type="project" value="TreeGrafter"/>
</dbReference>
<dbReference type="GO" id="GO:0006096">
    <property type="term" value="P:glycolytic process"/>
    <property type="evidence" value="ECO:0007669"/>
    <property type="project" value="UniProtKB-UniRule"/>
</dbReference>
<dbReference type="CDD" id="cd05015">
    <property type="entry name" value="SIS_PGI_1"/>
    <property type="match status" value="1"/>
</dbReference>
<dbReference type="CDD" id="cd05016">
    <property type="entry name" value="SIS_PGI_2"/>
    <property type="match status" value="1"/>
</dbReference>
<dbReference type="FunFam" id="3.40.50.10490:FF:000018">
    <property type="entry name" value="Glucose-6-phosphate isomerase"/>
    <property type="match status" value="1"/>
</dbReference>
<dbReference type="Gene3D" id="1.10.1390.10">
    <property type="match status" value="1"/>
</dbReference>
<dbReference type="Gene3D" id="3.40.50.10490">
    <property type="entry name" value="Glucose-6-phosphate isomerase like protein, domain 1"/>
    <property type="match status" value="2"/>
</dbReference>
<dbReference type="HAMAP" id="MF_00473">
    <property type="entry name" value="G6P_isomerase"/>
    <property type="match status" value="1"/>
</dbReference>
<dbReference type="InterPro" id="IPR001672">
    <property type="entry name" value="G6P_Isomerase"/>
</dbReference>
<dbReference type="InterPro" id="IPR023096">
    <property type="entry name" value="G6P_Isomerase_C"/>
</dbReference>
<dbReference type="InterPro" id="IPR018189">
    <property type="entry name" value="Phosphoglucose_isomerase_CS"/>
</dbReference>
<dbReference type="InterPro" id="IPR046348">
    <property type="entry name" value="SIS_dom_sf"/>
</dbReference>
<dbReference type="InterPro" id="IPR035476">
    <property type="entry name" value="SIS_PGI_1"/>
</dbReference>
<dbReference type="InterPro" id="IPR035482">
    <property type="entry name" value="SIS_PGI_2"/>
</dbReference>
<dbReference type="NCBIfam" id="NF001211">
    <property type="entry name" value="PRK00179.1"/>
    <property type="match status" value="1"/>
</dbReference>
<dbReference type="PANTHER" id="PTHR11469">
    <property type="entry name" value="GLUCOSE-6-PHOSPHATE ISOMERASE"/>
    <property type="match status" value="1"/>
</dbReference>
<dbReference type="PANTHER" id="PTHR11469:SF1">
    <property type="entry name" value="GLUCOSE-6-PHOSPHATE ISOMERASE"/>
    <property type="match status" value="1"/>
</dbReference>
<dbReference type="Pfam" id="PF00342">
    <property type="entry name" value="PGI"/>
    <property type="match status" value="1"/>
</dbReference>
<dbReference type="PRINTS" id="PR00662">
    <property type="entry name" value="G6PISOMERASE"/>
</dbReference>
<dbReference type="SUPFAM" id="SSF53697">
    <property type="entry name" value="SIS domain"/>
    <property type="match status" value="1"/>
</dbReference>
<dbReference type="PROSITE" id="PS00765">
    <property type="entry name" value="P_GLUCOSE_ISOMERASE_1"/>
    <property type="match status" value="1"/>
</dbReference>
<dbReference type="PROSITE" id="PS00174">
    <property type="entry name" value="P_GLUCOSE_ISOMERASE_2"/>
    <property type="match status" value="1"/>
</dbReference>
<dbReference type="PROSITE" id="PS51463">
    <property type="entry name" value="P_GLUCOSE_ISOMERASE_3"/>
    <property type="match status" value="1"/>
</dbReference>